<sequence length="347" mass="37885">MSINQQYVSGKSTEVRDVTIIGGGPTGIFAAVQCGMHHINCRIIDSMPSLGGQLTALYPEKHIYDVAGFPEVSAAGLIEQLWSQAARYKPEVVLGDKVVDVKKLDDGSFEVFTEKGHSYFSRAVLIAAGLGAFSPRKLPQLKDFEHLEETSIFYTVSSIDHFKDEKVVVVGGGDSALDWTIALLNVAEHVTLVHRMKEFQAHGKTVADAYEAQETGKLDIYLESEVASVLADSDRLTHAILKTPDEEITIEATRLLPLIGFRSNLGPIKNWGIEISGNGILVDNHMQTTVEGIYAAGDIAVYEGKLKLIQTGLSDAAMAVRHSLRYIKPGEKVKQQFSSQKASEKKA</sequence>
<gene>
    <name type="ordered locus">Ctha_0950</name>
</gene>
<reference key="1">
    <citation type="submission" date="2008-06" db="EMBL/GenBank/DDBJ databases">
        <title>Complete sequence of Chloroherpeton thalassium ATCC 35110.</title>
        <authorList>
            <consortium name="US DOE Joint Genome Institute"/>
            <person name="Lucas S."/>
            <person name="Copeland A."/>
            <person name="Lapidus A."/>
            <person name="Glavina del Rio T."/>
            <person name="Dalin E."/>
            <person name="Tice H."/>
            <person name="Bruce D."/>
            <person name="Goodwin L."/>
            <person name="Pitluck S."/>
            <person name="Schmutz J."/>
            <person name="Larimer F."/>
            <person name="Land M."/>
            <person name="Hauser L."/>
            <person name="Kyrpides N."/>
            <person name="Mikhailova N."/>
            <person name="Liu Z."/>
            <person name="Li T."/>
            <person name="Zhao F."/>
            <person name="Overmann J."/>
            <person name="Bryant D.A."/>
            <person name="Richardson P."/>
        </authorList>
    </citation>
    <scope>NUCLEOTIDE SEQUENCE [LARGE SCALE GENOMIC DNA]</scope>
    <source>
        <strain>ATCC 35110 / GB-78</strain>
    </source>
</reference>
<dbReference type="EC" id="1.18.1.2" evidence="1"/>
<dbReference type="EMBL" id="CP001100">
    <property type="protein sequence ID" value="ACF13415.1"/>
    <property type="molecule type" value="Genomic_DNA"/>
</dbReference>
<dbReference type="RefSeq" id="WP_012499499.1">
    <property type="nucleotide sequence ID" value="NC_011026.1"/>
</dbReference>
<dbReference type="SMR" id="B3QXE1"/>
<dbReference type="STRING" id="517418.Ctha_0950"/>
<dbReference type="KEGG" id="cts:Ctha_0950"/>
<dbReference type="eggNOG" id="COG0492">
    <property type="taxonomic scope" value="Bacteria"/>
</dbReference>
<dbReference type="HOGENOM" id="CLU_031864_5_5_10"/>
<dbReference type="OrthoDB" id="9806179at2"/>
<dbReference type="Proteomes" id="UP000001208">
    <property type="component" value="Chromosome"/>
</dbReference>
<dbReference type="GO" id="GO:0004324">
    <property type="term" value="F:ferredoxin-NADP+ reductase activity"/>
    <property type="evidence" value="ECO:0007669"/>
    <property type="project" value="UniProtKB-UniRule"/>
</dbReference>
<dbReference type="GO" id="GO:0050660">
    <property type="term" value="F:flavin adenine dinucleotide binding"/>
    <property type="evidence" value="ECO:0007669"/>
    <property type="project" value="UniProtKB-UniRule"/>
</dbReference>
<dbReference type="GO" id="GO:0050661">
    <property type="term" value="F:NADP binding"/>
    <property type="evidence" value="ECO:0007669"/>
    <property type="project" value="UniProtKB-UniRule"/>
</dbReference>
<dbReference type="Gene3D" id="3.50.50.60">
    <property type="entry name" value="FAD/NAD(P)-binding domain"/>
    <property type="match status" value="2"/>
</dbReference>
<dbReference type="HAMAP" id="MF_01685">
    <property type="entry name" value="FENR2"/>
    <property type="match status" value="1"/>
</dbReference>
<dbReference type="InterPro" id="IPR036188">
    <property type="entry name" value="FAD/NAD-bd_sf"/>
</dbReference>
<dbReference type="InterPro" id="IPR023753">
    <property type="entry name" value="FAD/NAD-binding_dom"/>
</dbReference>
<dbReference type="InterPro" id="IPR022890">
    <property type="entry name" value="Fd--NADP_Rdtase_type_2"/>
</dbReference>
<dbReference type="InterPro" id="IPR050097">
    <property type="entry name" value="Ferredoxin-NADP_redctase_2"/>
</dbReference>
<dbReference type="PANTHER" id="PTHR48105">
    <property type="entry name" value="THIOREDOXIN REDUCTASE 1-RELATED-RELATED"/>
    <property type="match status" value="1"/>
</dbReference>
<dbReference type="Pfam" id="PF07992">
    <property type="entry name" value="Pyr_redox_2"/>
    <property type="match status" value="1"/>
</dbReference>
<dbReference type="PRINTS" id="PR00368">
    <property type="entry name" value="FADPNR"/>
</dbReference>
<dbReference type="PRINTS" id="PR00469">
    <property type="entry name" value="PNDRDTASEII"/>
</dbReference>
<dbReference type="SUPFAM" id="SSF51905">
    <property type="entry name" value="FAD/NAD(P)-binding domain"/>
    <property type="match status" value="1"/>
</dbReference>
<name>FENR1_CHLT3</name>
<feature type="chain" id="PRO_0000364822" description="Ferredoxin--NADP reductase 1">
    <location>
        <begin position="1"/>
        <end position="347"/>
    </location>
</feature>
<feature type="binding site" evidence="1">
    <location>
        <position position="26"/>
    </location>
    <ligand>
        <name>FAD</name>
        <dbReference type="ChEBI" id="CHEBI:57692"/>
    </ligand>
</feature>
<feature type="binding site" evidence="1">
    <location>
        <position position="45"/>
    </location>
    <ligand>
        <name>FAD</name>
        <dbReference type="ChEBI" id="CHEBI:57692"/>
    </ligand>
</feature>
<feature type="binding site" evidence="1">
    <location>
        <position position="53"/>
    </location>
    <ligand>
        <name>FAD</name>
        <dbReference type="ChEBI" id="CHEBI:57692"/>
    </ligand>
</feature>
<feature type="binding site" evidence="1">
    <location>
        <position position="58"/>
    </location>
    <ligand>
        <name>FAD</name>
        <dbReference type="ChEBI" id="CHEBI:57692"/>
    </ligand>
</feature>
<feature type="binding site" evidence="1">
    <location>
        <position position="98"/>
    </location>
    <ligand>
        <name>FAD</name>
        <dbReference type="ChEBI" id="CHEBI:57692"/>
    </ligand>
</feature>
<feature type="binding site" evidence="1">
    <location>
        <position position="133"/>
    </location>
    <ligand>
        <name>FAD</name>
        <dbReference type="ChEBI" id="CHEBI:57692"/>
    </ligand>
</feature>
<feature type="binding site" evidence="1">
    <location>
        <position position="298"/>
    </location>
    <ligand>
        <name>FAD</name>
        <dbReference type="ChEBI" id="CHEBI:57692"/>
    </ligand>
</feature>
<feature type="binding site" evidence="1">
    <location>
        <position position="339"/>
    </location>
    <ligand>
        <name>FAD</name>
        <dbReference type="ChEBI" id="CHEBI:57692"/>
    </ligand>
</feature>
<proteinExistence type="inferred from homology"/>
<evidence type="ECO:0000255" key="1">
    <source>
        <dbReference type="HAMAP-Rule" id="MF_01685"/>
    </source>
</evidence>
<organism>
    <name type="scientific">Chloroherpeton thalassium (strain ATCC 35110 / GB-78)</name>
    <dbReference type="NCBI Taxonomy" id="517418"/>
    <lineage>
        <taxon>Bacteria</taxon>
        <taxon>Pseudomonadati</taxon>
        <taxon>Chlorobiota</taxon>
        <taxon>Chlorobiia</taxon>
        <taxon>Chlorobiales</taxon>
        <taxon>Chloroherpetonaceae</taxon>
        <taxon>Chloroherpeton</taxon>
    </lineage>
</organism>
<keyword id="KW-0274">FAD</keyword>
<keyword id="KW-0285">Flavoprotein</keyword>
<keyword id="KW-0521">NADP</keyword>
<keyword id="KW-0560">Oxidoreductase</keyword>
<keyword id="KW-1185">Reference proteome</keyword>
<comment type="catalytic activity">
    <reaction evidence="1">
        <text>2 reduced [2Fe-2S]-[ferredoxin] + NADP(+) + H(+) = 2 oxidized [2Fe-2S]-[ferredoxin] + NADPH</text>
        <dbReference type="Rhea" id="RHEA:20125"/>
        <dbReference type="Rhea" id="RHEA-COMP:10000"/>
        <dbReference type="Rhea" id="RHEA-COMP:10001"/>
        <dbReference type="ChEBI" id="CHEBI:15378"/>
        <dbReference type="ChEBI" id="CHEBI:33737"/>
        <dbReference type="ChEBI" id="CHEBI:33738"/>
        <dbReference type="ChEBI" id="CHEBI:57783"/>
        <dbReference type="ChEBI" id="CHEBI:58349"/>
        <dbReference type="EC" id="1.18.1.2"/>
    </reaction>
</comment>
<comment type="cofactor">
    <cofactor evidence="1">
        <name>FAD</name>
        <dbReference type="ChEBI" id="CHEBI:57692"/>
    </cofactor>
    <text evidence="1">Binds 1 FAD per subunit.</text>
</comment>
<comment type="subunit">
    <text evidence="1">Homodimer.</text>
</comment>
<comment type="similarity">
    <text evidence="1">Belongs to the ferredoxin--NADP reductase type 2 family.</text>
</comment>
<protein>
    <recommendedName>
        <fullName evidence="1">Ferredoxin--NADP reductase 1</fullName>
        <shortName evidence="1">FNR 1</shortName>
        <shortName evidence="1">Fd-NADP(+) reductase 1</shortName>
        <ecNumber evidence="1">1.18.1.2</ecNumber>
    </recommendedName>
</protein>
<accession>B3QXE1</accession>